<evidence type="ECO:0000255" key="1">
    <source>
        <dbReference type="HAMAP-Rule" id="MF_00017"/>
    </source>
</evidence>
<gene>
    <name evidence="1" type="primary">recR</name>
    <name type="ordered locus">Dhaf_0052</name>
</gene>
<proteinExistence type="inferred from homology"/>
<comment type="function">
    <text evidence="1">May play a role in DNA repair. It seems to be involved in an RecBC-independent recombinational process of DNA repair. It may act with RecF and RecO.</text>
</comment>
<comment type="similarity">
    <text evidence="1">Belongs to the RecR family.</text>
</comment>
<name>RECR_DESHD</name>
<reference key="1">
    <citation type="journal article" date="2012" name="BMC Microbiol.">
        <title>Genome sequence of Desulfitobacterium hafniense DCB-2, a Gram-positive anaerobe capable of dehalogenation and metal reduction.</title>
        <authorList>
            <person name="Kim S.H."/>
            <person name="Harzman C."/>
            <person name="Davis J.K."/>
            <person name="Hutcheson R."/>
            <person name="Broderick J.B."/>
            <person name="Marsh T.L."/>
            <person name="Tiedje J.M."/>
        </authorList>
    </citation>
    <scope>NUCLEOTIDE SEQUENCE [LARGE SCALE GENOMIC DNA]</scope>
    <source>
        <strain>DSM 10664 / DCB-2</strain>
    </source>
</reference>
<accession>B8FY16</accession>
<dbReference type="EMBL" id="CP001336">
    <property type="protein sequence ID" value="ACL18121.1"/>
    <property type="molecule type" value="Genomic_DNA"/>
</dbReference>
<dbReference type="RefSeq" id="WP_005815034.1">
    <property type="nucleotide sequence ID" value="NC_011830.1"/>
</dbReference>
<dbReference type="SMR" id="B8FY16"/>
<dbReference type="KEGG" id="dhd:Dhaf_0052"/>
<dbReference type="HOGENOM" id="CLU_060739_1_1_9"/>
<dbReference type="Proteomes" id="UP000007726">
    <property type="component" value="Chromosome"/>
</dbReference>
<dbReference type="GO" id="GO:0003677">
    <property type="term" value="F:DNA binding"/>
    <property type="evidence" value="ECO:0007669"/>
    <property type="project" value="UniProtKB-UniRule"/>
</dbReference>
<dbReference type="GO" id="GO:0008270">
    <property type="term" value="F:zinc ion binding"/>
    <property type="evidence" value="ECO:0007669"/>
    <property type="project" value="UniProtKB-KW"/>
</dbReference>
<dbReference type="GO" id="GO:0006310">
    <property type="term" value="P:DNA recombination"/>
    <property type="evidence" value="ECO:0007669"/>
    <property type="project" value="UniProtKB-UniRule"/>
</dbReference>
<dbReference type="GO" id="GO:0006281">
    <property type="term" value="P:DNA repair"/>
    <property type="evidence" value="ECO:0007669"/>
    <property type="project" value="UniProtKB-UniRule"/>
</dbReference>
<dbReference type="CDD" id="cd01025">
    <property type="entry name" value="TOPRIM_recR"/>
    <property type="match status" value="1"/>
</dbReference>
<dbReference type="Gene3D" id="3.30.60.80">
    <property type="match status" value="1"/>
</dbReference>
<dbReference type="Gene3D" id="3.40.1360.10">
    <property type="match status" value="1"/>
</dbReference>
<dbReference type="Gene3D" id="6.10.250.240">
    <property type="match status" value="1"/>
</dbReference>
<dbReference type="Gene3D" id="1.10.8.420">
    <property type="entry name" value="RecR Domain 1"/>
    <property type="match status" value="1"/>
</dbReference>
<dbReference type="HAMAP" id="MF_00017">
    <property type="entry name" value="RecR"/>
    <property type="match status" value="1"/>
</dbReference>
<dbReference type="InterPro" id="IPR000093">
    <property type="entry name" value="DNA_Rcmb_RecR"/>
</dbReference>
<dbReference type="InterPro" id="IPR023627">
    <property type="entry name" value="Rcmb_RecR"/>
</dbReference>
<dbReference type="InterPro" id="IPR015967">
    <property type="entry name" value="Rcmb_RecR_Znf"/>
</dbReference>
<dbReference type="InterPro" id="IPR006171">
    <property type="entry name" value="TOPRIM_dom"/>
</dbReference>
<dbReference type="InterPro" id="IPR034137">
    <property type="entry name" value="TOPRIM_RecR"/>
</dbReference>
<dbReference type="NCBIfam" id="TIGR00615">
    <property type="entry name" value="recR"/>
    <property type="match status" value="1"/>
</dbReference>
<dbReference type="PANTHER" id="PTHR30446">
    <property type="entry name" value="RECOMBINATION PROTEIN RECR"/>
    <property type="match status" value="1"/>
</dbReference>
<dbReference type="PANTHER" id="PTHR30446:SF0">
    <property type="entry name" value="RECOMBINATION PROTEIN RECR"/>
    <property type="match status" value="1"/>
</dbReference>
<dbReference type="Pfam" id="PF21175">
    <property type="entry name" value="RecR_C"/>
    <property type="match status" value="1"/>
</dbReference>
<dbReference type="Pfam" id="PF21176">
    <property type="entry name" value="RecR_HhH"/>
    <property type="match status" value="1"/>
</dbReference>
<dbReference type="Pfam" id="PF02132">
    <property type="entry name" value="RecR_ZnF"/>
    <property type="match status" value="1"/>
</dbReference>
<dbReference type="Pfam" id="PF13662">
    <property type="entry name" value="Toprim_4"/>
    <property type="match status" value="1"/>
</dbReference>
<dbReference type="SMART" id="SM00493">
    <property type="entry name" value="TOPRIM"/>
    <property type="match status" value="1"/>
</dbReference>
<dbReference type="SUPFAM" id="SSF111304">
    <property type="entry name" value="Recombination protein RecR"/>
    <property type="match status" value="1"/>
</dbReference>
<dbReference type="PROSITE" id="PS50880">
    <property type="entry name" value="TOPRIM"/>
    <property type="match status" value="1"/>
</dbReference>
<feature type="chain" id="PRO_1000195379" description="Recombination protein RecR">
    <location>
        <begin position="1"/>
        <end position="198"/>
    </location>
</feature>
<feature type="domain" description="Toprim" evidence="1">
    <location>
        <begin position="82"/>
        <end position="175"/>
    </location>
</feature>
<feature type="zinc finger region" description="C4-type" evidence="1">
    <location>
        <begin position="59"/>
        <end position="74"/>
    </location>
</feature>
<keyword id="KW-0227">DNA damage</keyword>
<keyword id="KW-0233">DNA recombination</keyword>
<keyword id="KW-0234">DNA repair</keyword>
<keyword id="KW-0479">Metal-binding</keyword>
<keyword id="KW-0862">Zinc</keyword>
<keyword id="KW-0863">Zinc-finger</keyword>
<organism>
    <name type="scientific">Desulfitobacterium hafniense (strain DSM 10664 / DCB-2)</name>
    <dbReference type="NCBI Taxonomy" id="272564"/>
    <lineage>
        <taxon>Bacteria</taxon>
        <taxon>Bacillati</taxon>
        <taxon>Bacillota</taxon>
        <taxon>Clostridia</taxon>
        <taxon>Eubacteriales</taxon>
        <taxon>Desulfitobacteriaceae</taxon>
        <taxon>Desulfitobacterium</taxon>
    </lineage>
</organism>
<protein>
    <recommendedName>
        <fullName evidence="1">Recombination protein RecR</fullName>
    </recommendedName>
</protein>
<sequence length="198" mass="21900">MDFLNYPEPLADLITGLSRLPGIGPKTAGRLAFYLLQQPQVAENLAEAMIRAQREIRQCSLCCNYTDHDPCPICTGEKRERTLLCIVEQPRDVVSLEKTREFKGLYHVLHGVISPLEGVGPEQLTISKLLGRLEGVQEVVMAMNPTVEGEATALYLSRLLKPLGIKVTRIAHGLPVGGDLEYADEITIARALEGRRQI</sequence>